<evidence type="ECO:0000255" key="1">
    <source>
        <dbReference type="HAMAP-Rule" id="MF_00725"/>
    </source>
</evidence>
<protein>
    <recommendedName>
        <fullName evidence="1">Flagellar transcriptional regulator FlhD</fullName>
    </recommendedName>
</protein>
<dbReference type="EMBL" id="CP000802">
    <property type="protein sequence ID" value="ABV06299.1"/>
    <property type="molecule type" value="Genomic_DNA"/>
</dbReference>
<dbReference type="RefSeq" id="WP_001295647.1">
    <property type="nucleotide sequence ID" value="NC_009800.1"/>
</dbReference>
<dbReference type="SMR" id="A8A195"/>
<dbReference type="GeneID" id="93776197"/>
<dbReference type="KEGG" id="ecx:EcHS_A1988"/>
<dbReference type="HOGENOM" id="CLU_144160_0_0_6"/>
<dbReference type="GO" id="GO:0005737">
    <property type="term" value="C:cytoplasm"/>
    <property type="evidence" value="ECO:0007669"/>
    <property type="project" value="UniProtKB-SubCell"/>
</dbReference>
<dbReference type="GO" id="GO:0003677">
    <property type="term" value="F:DNA binding"/>
    <property type="evidence" value="ECO:0007669"/>
    <property type="project" value="UniProtKB-UniRule"/>
</dbReference>
<dbReference type="GO" id="GO:0044780">
    <property type="term" value="P:bacterial-type flagellum assembly"/>
    <property type="evidence" value="ECO:0007669"/>
    <property type="project" value="InterPro"/>
</dbReference>
<dbReference type="GO" id="GO:0045893">
    <property type="term" value="P:positive regulation of DNA-templated transcription"/>
    <property type="evidence" value="ECO:0007669"/>
    <property type="project" value="InterPro"/>
</dbReference>
<dbReference type="GO" id="GO:1902208">
    <property type="term" value="P:regulation of bacterial-type flagellum assembly"/>
    <property type="evidence" value="ECO:0007669"/>
    <property type="project" value="UniProtKB-UniRule"/>
</dbReference>
<dbReference type="FunFam" id="1.10.4000.10:FF:000001">
    <property type="entry name" value="Flagellar transcriptional regulator FlhD"/>
    <property type="match status" value="1"/>
</dbReference>
<dbReference type="Gene3D" id="1.10.4000.10">
    <property type="entry name" value="Flagellar transcriptional activator FlhD"/>
    <property type="match status" value="1"/>
</dbReference>
<dbReference type="HAMAP" id="MF_00725">
    <property type="entry name" value="FlhD"/>
    <property type="match status" value="1"/>
</dbReference>
<dbReference type="InterPro" id="IPR023559">
    <property type="entry name" value="Flagellar_FlhD"/>
</dbReference>
<dbReference type="InterPro" id="IPR036194">
    <property type="entry name" value="FlhD_sf"/>
</dbReference>
<dbReference type="NCBIfam" id="NF002783">
    <property type="entry name" value="PRK02909.1-1"/>
    <property type="match status" value="1"/>
</dbReference>
<dbReference type="Pfam" id="PF05247">
    <property type="entry name" value="FlhD"/>
    <property type="match status" value="1"/>
</dbReference>
<dbReference type="SUPFAM" id="SSF63592">
    <property type="entry name" value="Flagellar transcriptional activator FlhD"/>
    <property type="match status" value="1"/>
</dbReference>
<comment type="function">
    <text evidence="1">Functions in complex with FlhC as a master transcriptional regulator that regulates transcription of several flagellar and non-flagellar operons by binding to their promoter region. Activates expression of class 2 flagellar genes, including fliA, which is a flagellum-specific sigma factor that turns on the class 3 genes. Also regulates genes whose products function in a variety of physiological pathways.</text>
</comment>
<comment type="subunit">
    <text evidence="1">Homodimer; disulfide-linked. Forms a heterohexamer composed of two FlhC and four FlhD subunits. Each FlhC binds a FlhD dimer, forming a heterotrimer, and a hexamer assembles by dimerization of two heterotrimers.</text>
</comment>
<comment type="subcellular location">
    <subcellularLocation>
        <location evidence="1">Cytoplasm</location>
    </subcellularLocation>
</comment>
<comment type="domain">
    <text evidence="1">The C-terminal region contains a putative helix-turn-helix (HTH) motif, suggesting that this region may bind DNA.</text>
</comment>
<comment type="similarity">
    <text evidence="1">Belongs to the FlhD family.</text>
</comment>
<organism>
    <name type="scientific">Escherichia coli O9:H4 (strain HS)</name>
    <dbReference type="NCBI Taxonomy" id="331112"/>
    <lineage>
        <taxon>Bacteria</taxon>
        <taxon>Pseudomonadati</taxon>
        <taxon>Pseudomonadota</taxon>
        <taxon>Gammaproteobacteria</taxon>
        <taxon>Enterobacterales</taxon>
        <taxon>Enterobacteriaceae</taxon>
        <taxon>Escherichia</taxon>
    </lineage>
</organism>
<gene>
    <name evidence="1" type="primary">flhD</name>
    <name type="ordered locus">EcHS_A1988</name>
</gene>
<keyword id="KW-0010">Activator</keyword>
<keyword id="KW-1005">Bacterial flagellum biogenesis</keyword>
<keyword id="KW-0963">Cytoplasm</keyword>
<keyword id="KW-1015">Disulfide bond</keyword>
<keyword id="KW-0238">DNA-binding</keyword>
<keyword id="KW-0804">Transcription</keyword>
<keyword id="KW-0805">Transcription regulation</keyword>
<feature type="chain" id="PRO_1000062098" description="Flagellar transcriptional regulator FlhD">
    <location>
        <begin position="1"/>
        <end position="116"/>
    </location>
</feature>
<feature type="disulfide bond" description="Interchain" evidence="1">
    <location>
        <position position="65"/>
    </location>
</feature>
<accession>A8A195</accession>
<sequence length="116" mass="13316">MHTSELLKHIYDINLSYLLLAQRLIVQDKASAMFRLGINEEMATTLAALTLPQMVKLAETNQLVCHFRFDSHQTITQLTQDSRVDDLQQIHTGIMLSTRLLNDVNQPEEALRKKRA</sequence>
<name>FLHD_ECOHS</name>
<reference key="1">
    <citation type="journal article" date="2008" name="J. Bacteriol.">
        <title>The pangenome structure of Escherichia coli: comparative genomic analysis of E. coli commensal and pathogenic isolates.</title>
        <authorList>
            <person name="Rasko D.A."/>
            <person name="Rosovitz M.J."/>
            <person name="Myers G.S.A."/>
            <person name="Mongodin E.F."/>
            <person name="Fricke W.F."/>
            <person name="Gajer P."/>
            <person name="Crabtree J."/>
            <person name="Sebaihia M."/>
            <person name="Thomson N.R."/>
            <person name="Chaudhuri R."/>
            <person name="Henderson I.R."/>
            <person name="Sperandio V."/>
            <person name="Ravel J."/>
        </authorList>
    </citation>
    <scope>NUCLEOTIDE SEQUENCE [LARGE SCALE GENOMIC DNA]</scope>
    <source>
        <strain>HS</strain>
    </source>
</reference>
<proteinExistence type="inferred from homology"/>